<proteinExistence type="inferred from homology"/>
<keyword id="KW-0028">Amino-acid biosynthesis</keyword>
<keyword id="KW-0100">Branched-chain amino acid biosynthesis</keyword>
<keyword id="KW-0963">Cytoplasm</keyword>
<keyword id="KW-0432">Leucine biosynthesis</keyword>
<keyword id="KW-0460">Magnesium</keyword>
<keyword id="KW-0464">Manganese</keyword>
<keyword id="KW-0479">Metal-binding</keyword>
<keyword id="KW-0520">NAD</keyword>
<keyword id="KW-0560">Oxidoreductase</keyword>
<keyword id="KW-1185">Reference proteome</keyword>
<feature type="chain" id="PRO_0000083598" description="3-isopropylmalate dehydrogenase">
    <location>
        <begin position="1"/>
        <end position="372"/>
    </location>
</feature>
<feature type="binding site" evidence="1">
    <location>
        <begin position="79"/>
        <end position="90"/>
    </location>
    <ligand>
        <name>NAD(+)</name>
        <dbReference type="ChEBI" id="CHEBI:57540"/>
    </ligand>
</feature>
<feature type="binding site" evidence="1">
    <location>
        <position position="97"/>
    </location>
    <ligand>
        <name>substrate</name>
    </ligand>
</feature>
<feature type="binding site" evidence="1">
    <location>
        <position position="107"/>
    </location>
    <ligand>
        <name>substrate</name>
    </ligand>
</feature>
<feature type="binding site" evidence="1">
    <location>
        <position position="136"/>
    </location>
    <ligand>
        <name>substrate</name>
    </ligand>
</feature>
<feature type="binding site" evidence="1">
    <location>
        <position position="225"/>
    </location>
    <ligand>
        <name>Mg(2+)</name>
        <dbReference type="ChEBI" id="CHEBI:18420"/>
    </ligand>
</feature>
<feature type="binding site" evidence="1">
    <location>
        <position position="225"/>
    </location>
    <ligand>
        <name>substrate</name>
    </ligand>
</feature>
<feature type="binding site" evidence="1">
    <location>
        <position position="250"/>
    </location>
    <ligand>
        <name>Mg(2+)</name>
        <dbReference type="ChEBI" id="CHEBI:18420"/>
    </ligand>
</feature>
<feature type="binding site" evidence="1">
    <location>
        <position position="254"/>
    </location>
    <ligand>
        <name>Mg(2+)</name>
        <dbReference type="ChEBI" id="CHEBI:18420"/>
    </ligand>
</feature>
<feature type="binding site" evidence="1">
    <location>
        <begin position="289"/>
        <end position="300"/>
    </location>
    <ligand>
        <name>NAD(+)</name>
        <dbReference type="ChEBI" id="CHEBI:57540"/>
    </ligand>
</feature>
<feature type="site" description="Important for catalysis" evidence="1">
    <location>
        <position position="143"/>
    </location>
</feature>
<feature type="site" description="Important for catalysis" evidence="1">
    <location>
        <position position="192"/>
    </location>
</feature>
<reference key="1">
    <citation type="submission" date="1998-05" db="EMBL/GenBank/DDBJ databases">
        <title>Isolation of the Ashbya gossypii LEU2 gene and its use as a marker gene in transformation experiments.</title>
        <authorList>
            <person name="Mohr C."/>
            <person name="Philippsen P."/>
        </authorList>
    </citation>
    <scope>NUCLEOTIDE SEQUENCE [GENOMIC DNA]</scope>
    <source>
        <strain>ATCC 10895 / CBS 109.51 / FGSC 9923 / NRRL Y-1056</strain>
    </source>
</reference>
<reference key="2">
    <citation type="submission" date="1997-08" db="EMBL/GenBank/DDBJ databases">
        <title>AgLEU2 gene.</title>
        <authorList>
            <person name="Revuelta J.L."/>
        </authorList>
    </citation>
    <scope>NUCLEOTIDE SEQUENCE [GENOMIC DNA]</scope>
    <source>
        <strain>ATCC 10895 / CBS 109.51 / FGSC 9923 / NRRL Y-1056</strain>
    </source>
</reference>
<reference key="3">
    <citation type="journal article" date="2004" name="Science">
        <title>The Ashbya gossypii genome as a tool for mapping the ancient Saccharomyces cerevisiae genome.</title>
        <authorList>
            <person name="Dietrich F.S."/>
            <person name="Voegeli S."/>
            <person name="Brachat S."/>
            <person name="Lerch A."/>
            <person name="Gates K."/>
            <person name="Steiner S."/>
            <person name="Mohr C."/>
            <person name="Poehlmann R."/>
            <person name="Luedi P."/>
            <person name="Choi S."/>
            <person name="Wing R.A."/>
            <person name="Flavier A."/>
            <person name="Gaffney T.D."/>
            <person name="Philippsen P."/>
        </authorList>
    </citation>
    <scope>NUCLEOTIDE SEQUENCE [LARGE SCALE GENOMIC DNA]</scope>
    <source>
        <strain>ATCC 10895 / CBS 109.51 / FGSC 9923 / NRRL Y-1056</strain>
    </source>
</reference>
<reference key="4">
    <citation type="journal article" date="2013" name="G3 (Bethesda)">
        <title>Genomes of Ashbya fungi isolated from insects reveal four mating-type loci, numerous translocations, lack of transposons, and distinct gene duplications.</title>
        <authorList>
            <person name="Dietrich F.S."/>
            <person name="Voegeli S."/>
            <person name="Kuo S."/>
            <person name="Philippsen P."/>
        </authorList>
    </citation>
    <scope>GENOME REANNOTATION</scope>
    <source>
        <strain>ATCC 10895 / CBS 109.51 / FGSC 9923 / NRRL Y-1056</strain>
    </source>
</reference>
<evidence type="ECO:0000250" key="1"/>
<evidence type="ECO:0000305" key="2"/>
<gene>
    <name type="primary">LEU2</name>
    <name type="ordered locus">AAL012C</name>
</gene>
<organism>
    <name type="scientific">Eremothecium gossypii (strain ATCC 10895 / CBS 109.51 / FGSC 9923 / NRRL Y-1056)</name>
    <name type="common">Yeast</name>
    <name type="synonym">Ashbya gossypii</name>
    <dbReference type="NCBI Taxonomy" id="284811"/>
    <lineage>
        <taxon>Eukaryota</taxon>
        <taxon>Fungi</taxon>
        <taxon>Dikarya</taxon>
        <taxon>Ascomycota</taxon>
        <taxon>Saccharomycotina</taxon>
        <taxon>Saccharomycetes</taxon>
        <taxon>Saccharomycetales</taxon>
        <taxon>Saccharomycetaceae</taxon>
        <taxon>Eremothecium</taxon>
    </lineage>
</organism>
<sequence>MAAVKRIVVLPGDHIGREVVEEAVKVLGAVEQSLSDVHFDFQYHLVGGAAIDATGSALPDEALGAAKEADAVLLGAVGGPKWQGGAVRPEQGLLKLRQELGVYANLRPCNFAADSLLELSPLRPEIARDTDIMVVRELLGGSYFGERHEDEGDGVAWDTDKYTVKEVQRIARMAGFLALQHDPPLPVWSLDKANVLASSRLWRKTVEETFQSEFPNVQLQHQLIDSAAMILVKNPRAFNGVVVTSNMFGDIISDEASVIPGSLGLLPSASLASLPDSKSAFGLYEPCHGSAPDLPAGKANPIGCILSAAMMLKLSLNMVAAGEAVEQAVQEVLDSGVRTGDLLGSSSTSEVGDAIALAVKEALRRQSAAGLS</sequence>
<dbReference type="EC" id="1.1.1.85"/>
<dbReference type="EMBL" id="AJ006406">
    <property type="protein sequence ID" value="CAA07006.1"/>
    <property type="molecule type" value="Genomic_DNA"/>
</dbReference>
<dbReference type="EMBL" id="AJ001115">
    <property type="protein sequence ID" value="CAA04541.1"/>
    <property type="molecule type" value="Genomic_DNA"/>
</dbReference>
<dbReference type="EMBL" id="AE016814">
    <property type="protein sequence ID" value="AAS50354.1"/>
    <property type="molecule type" value="Genomic_DNA"/>
</dbReference>
<dbReference type="RefSeq" id="NP_982530.1">
    <property type="nucleotide sequence ID" value="NM_207883.2"/>
</dbReference>
<dbReference type="SMR" id="O60027"/>
<dbReference type="FunCoup" id="O60027">
    <property type="interactions" value="985"/>
</dbReference>
<dbReference type="STRING" id="284811.O60027"/>
<dbReference type="EnsemblFungi" id="AAS50354">
    <property type="protein sequence ID" value="AAS50354"/>
    <property type="gene ID" value="AGOS_AAL012C"/>
</dbReference>
<dbReference type="GeneID" id="4618651"/>
<dbReference type="KEGG" id="ago:AGOS_AAL012C"/>
<dbReference type="eggNOG" id="KOG0786">
    <property type="taxonomic scope" value="Eukaryota"/>
</dbReference>
<dbReference type="HOGENOM" id="CLU_031953_0_3_1"/>
<dbReference type="InParanoid" id="O60027"/>
<dbReference type="OMA" id="EYDLGAR"/>
<dbReference type="OrthoDB" id="419183at2759"/>
<dbReference type="BRENDA" id="1.1.1.85">
    <property type="organism ID" value="484"/>
</dbReference>
<dbReference type="UniPathway" id="UPA00048">
    <property type="reaction ID" value="UER00072"/>
</dbReference>
<dbReference type="Proteomes" id="UP000000591">
    <property type="component" value="Chromosome I"/>
</dbReference>
<dbReference type="GO" id="GO:0005829">
    <property type="term" value="C:cytosol"/>
    <property type="evidence" value="ECO:0000318"/>
    <property type="project" value="GO_Central"/>
</dbReference>
<dbReference type="GO" id="GO:0003862">
    <property type="term" value="F:3-isopropylmalate dehydrogenase activity"/>
    <property type="evidence" value="ECO:0000318"/>
    <property type="project" value="GO_Central"/>
</dbReference>
<dbReference type="GO" id="GO:0000287">
    <property type="term" value="F:magnesium ion binding"/>
    <property type="evidence" value="ECO:0007669"/>
    <property type="project" value="InterPro"/>
</dbReference>
<dbReference type="GO" id="GO:0051287">
    <property type="term" value="F:NAD binding"/>
    <property type="evidence" value="ECO:0007669"/>
    <property type="project" value="InterPro"/>
</dbReference>
<dbReference type="GO" id="GO:0009098">
    <property type="term" value="P:L-leucine biosynthetic process"/>
    <property type="evidence" value="ECO:0000318"/>
    <property type="project" value="GO_Central"/>
</dbReference>
<dbReference type="FunFam" id="3.40.718.10:FF:000006">
    <property type="entry name" value="3-isopropylmalate dehydrogenase"/>
    <property type="match status" value="1"/>
</dbReference>
<dbReference type="Gene3D" id="3.40.718.10">
    <property type="entry name" value="Isopropylmalate Dehydrogenase"/>
    <property type="match status" value="1"/>
</dbReference>
<dbReference type="InterPro" id="IPR019818">
    <property type="entry name" value="IsoCit/isopropylmalate_DH_CS"/>
</dbReference>
<dbReference type="InterPro" id="IPR024084">
    <property type="entry name" value="IsoPropMal-DH-like_dom"/>
</dbReference>
<dbReference type="InterPro" id="IPR004429">
    <property type="entry name" value="Isopropylmalate_DH"/>
</dbReference>
<dbReference type="NCBIfam" id="TIGR00169">
    <property type="entry name" value="leuB"/>
    <property type="match status" value="1"/>
</dbReference>
<dbReference type="PANTHER" id="PTHR42979">
    <property type="entry name" value="3-ISOPROPYLMALATE DEHYDROGENASE"/>
    <property type="match status" value="1"/>
</dbReference>
<dbReference type="PANTHER" id="PTHR42979:SF1">
    <property type="entry name" value="3-ISOPROPYLMALATE DEHYDROGENASE"/>
    <property type="match status" value="1"/>
</dbReference>
<dbReference type="Pfam" id="PF00180">
    <property type="entry name" value="Iso_dh"/>
    <property type="match status" value="1"/>
</dbReference>
<dbReference type="SMART" id="SM01329">
    <property type="entry name" value="Iso_dh"/>
    <property type="match status" value="1"/>
</dbReference>
<dbReference type="SUPFAM" id="SSF53659">
    <property type="entry name" value="Isocitrate/Isopropylmalate dehydrogenase-like"/>
    <property type="match status" value="1"/>
</dbReference>
<dbReference type="PROSITE" id="PS00470">
    <property type="entry name" value="IDH_IMDH"/>
    <property type="match status" value="1"/>
</dbReference>
<name>LEU3_EREGS</name>
<protein>
    <recommendedName>
        <fullName>3-isopropylmalate dehydrogenase</fullName>
        <shortName>3-IPM-DH</shortName>
        <shortName>IMDH</shortName>
        <ecNumber>1.1.1.85</ecNumber>
    </recommendedName>
    <alternativeName>
        <fullName>Beta-IPM dehydrogenase</fullName>
    </alternativeName>
</protein>
<accession>O60027</accession>
<comment type="function">
    <text>Catalyzes the oxidation of 3-carboxy-2-hydroxy-4-methylpentanoate (3-isopropylmalate) to 3-carboxy-4-methyl-2-oxopentanoate. The product decarboxylates to 4-methyl-2 oxopentanoate.</text>
</comment>
<comment type="catalytic activity">
    <reaction>
        <text>(2R,3S)-3-isopropylmalate + NAD(+) = 4-methyl-2-oxopentanoate + CO2 + NADH</text>
        <dbReference type="Rhea" id="RHEA:32271"/>
        <dbReference type="ChEBI" id="CHEBI:16526"/>
        <dbReference type="ChEBI" id="CHEBI:17865"/>
        <dbReference type="ChEBI" id="CHEBI:35121"/>
        <dbReference type="ChEBI" id="CHEBI:57540"/>
        <dbReference type="ChEBI" id="CHEBI:57945"/>
        <dbReference type="EC" id="1.1.1.85"/>
    </reaction>
</comment>
<comment type="cofactor">
    <cofactor evidence="1">
        <name>Mg(2+)</name>
        <dbReference type="ChEBI" id="CHEBI:18420"/>
    </cofactor>
    <cofactor evidence="1">
        <name>Mn(2+)</name>
        <dbReference type="ChEBI" id="CHEBI:29035"/>
    </cofactor>
    <text evidence="1">Binds 1 Mg(2+) or Mn(2+) ion per subunit.</text>
</comment>
<comment type="pathway">
    <text>Amino-acid biosynthesis; L-leucine biosynthesis; L-leucine from 3-methyl-2-oxobutanoate: step 3/4.</text>
</comment>
<comment type="subunit">
    <text evidence="1">Homodimer.</text>
</comment>
<comment type="subcellular location">
    <subcellularLocation>
        <location>Cytoplasm</location>
    </subcellularLocation>
</comment>
<comment type="similarity">
    <text evidence="2">Belongs to the isocitrate and isopropylmalate dehydrogenases family.</text>
</comment>